<proteinExistence type="evidence at protein level"/>
<sequence length="984" mass="114896">MARILAFDIGISSIGWAFSENDELKDCGVRIFTKVENPKTGESLALPRRLARSARKRLARRKARLNHLKHLIANEFKLNYEDYQSFDESLAKAYKGSLISPYELRFRALNELLSKQDFARVILHIAKRRGYDDIKNSDDKEKGAILKAIKQNEEKLANYQSVGEYLYKEYFQKFKENSKEFTNVRNKKESYERCIAQSFLKDELKLIFKKQREFGFSFSKKFEEEVLSVAFYKRALKDFSHLVGNCSFFTDEKRAPKNSPLAFMFVALTRIINLLNNLKNTEGILYTKDDLNALLNEVLKNGTLTYKQTKKLLGLSDDYEFKGEKGTYFIEFKKYKEFIKALGEHNLSQDDLNEIAKDITLIKDEIKLKKALAKYDLNQNQIDSLSKLEFKDHLNISFKALKLVTPLMLEGKKYDEACNELNLKVAINEDKKDFLPAFNETYYKDEVTNPVVLRAIKEYRKVLNALLKKYGKVHKINIELAREVGKNHSQRAKIEKEQNENYKAKKDAELECEKLGLKINSKNILKLRLFKEQKEFCAYSGEKIKISDLQDEKMLEIDHIYPYSRSFDDSYMNKVLVFTKQNQEKLNQTPFEAFGNDSAKWQKIEVLAKNLPTKKQKRILDKNYKDKEQKNFKDRNLNDTRYIARLVLNYTKDYLDFLPLSDDENTKLNDTQKGSKVHVEAKSGMLTSALRHTWGFSAKDRNNHLHHAIDAVIIAYANNSIVKAFSDFKKEQESNSAELYAKKISELDYKNKRKFFEPFSGFRQKVLDKIDEIFVSKPERKKPSGALHEETFRKEEEFYQSYGGKEGVLKALELGKIRKVNGKIVKNGDMFRVDIFKHKKTNKFYAVPIYTMDFALKVLPNKAVARSKKGEIKDWILMDENYEFCFSLYKDSLILIQTKDMQEPEFVYYNAFTSSTVSLIVSKHDNKFETLSKNQKILFKNANEKEVIAKSIGIQNLKVFEKYIVSALGEVTKAEFRQREDFKK</sequence>
<organism>
    <name type="scientific">Campylobacter jejuni subsp. jejuni serotype O:2 (strain ATCC 700819 / NCTC 11168)</name>
    <dbReference type="NCBI Taxonomy" id="192222"/>
    <lineage>
        <taxon>Bacteria</taxon>
        <taxon>Pseudomonadati</taxon>
        <taxon>Campylobacterota</taxon>
        <taxon>Epsilonproteobacteria</taxon>
        <taxon>Campylobacterales</taxon>
        <taxon>Campylobacteraceae</taxon>
        <taxon>Campylobacter</taxon>
    </lineage>
</organism>
<feature type="chain" id="PRO_0000429983" description="CRISPR-associated endonuclease Cas9">
    <location>
        <begin position="1"/>
        <end position="984"/>
    </location>
</feature>
<feature type="domain" description="HNH Cas9-type" evidence="2">
    <location>
        <begin position="487"/>
        <end position="637"/>
    </location>
</feature>
<feature type="active site" description="For RuvC-like nuclease domain" evidence="1">
    <location>
        <position position="8"/>
    </location>
</feature>
<feature type="active site" description="Proton acceptor for HNH nuclease domain" evidence="1">
    <location>
        <position position="559"/>
    </location>
</feature>
<feature type="binding site" evidence="1">
    <location>
        <position position="8"/>
    </location>
    <ligand>
        <name>Mg(2+)</name>
        <dbReference type="ChEBI" id="CHEBI:18420"/>
        <label>1</label>
    </ligand>
</feature>
<feature type="binding site" evidence="1">
    <location>
        <position position="8"/>
    </location>
    <ligand>
        <name>Mg(2+)</name>
        <dbReference type="ChEBI" id="CHEBI:18420"/>
        <label>2</label>
    </ligand>
</feature>
<feature type="binding site" evidence="1">
    <location>
        <position position="479"/>
    </location>
    <ligand>
        <name>Mg(2+)</name>
        <dbReference type="ChEBI" id="CHEBI:18420"/>
        <label>1</label>
    </ligand>
</feature>
<feature type="binding site" evidence="1">
    <location>
        <position position="483"/>
    </location>
    <ligand>
        <name>Mg(2+)</name>
        <dbReference type="ChEBI" id="CHEBI:18420"/>
        <label>1</label>
    </ligand>
</feature>
<feature type="binding site" evidence="1">
    <location>
        <position position="483"/>
    </location>
    <ligand>
        <name>Mg(2+)</name>
        <dbReference type="ChEBI" id="CHEBI:18420"/>
        <label>2</label>
    </ligand>
</feature>
<feature type="binding site" evidence="1">
    <location>
        <position position="707"/>
    </location>
    <ligand>
        <name>Mg(2+)</name>
        <dbReference type="ChEBI" id="CHEBI:18420"/>
        <label>2</label>
    </ligand>
</feature>
<feature type="strand" evidence="7">
    <location>
        <begin position="4"/>
        <end position="9"/>
    </location>
</feature>
<feature type="strand" evidence="7">
    <location>
        <begin position="11"/>
        <end position="20"/>
    </location>
</feature>
<feature type="strand" evidence="7">
    <location>
        <begin position="23"/>
        <end position="31"/>
    </location>
</feature>
<feature type="helix" evidence="7">
    <location>
        <begin position="45"/>
        <end position="76"/>
    </location>
</feature>
<feature type="helix" evidence="7">
    <location>
        <begin position="80"/>
        <end position="83"/>
    </location>
</feature>
<feature type="helix" evidence="7">
    <location>
        <begin position="92"/>
        <end position="94"/>
    </location>
</feature>
<feature type="helix" evidence="7">
    <location>
        <begin position="101"/>
        <end position="107"/>
    </location>
</feature>
<feature type="turn" evidence="7">
    <location>
        <begin position="108"/>
        <end position="110"/>
    </location>
</feature>
<feature type="helix" evidence="7">
    <location>
        <begin position="115"/>
        <end position="127"/>
    </location>
</feature>
<feature type="helix" evidence="7">
    <location>
        <begin position="144"/>
        <end position="156"/>
    </location>
</feature>
<feature type="strand" evidence="6">
    <location>
        <begin position="159"/>
        <end position="161"/>
    </location>
</feature>
<feature type="helix" evidence="7">
    <location>
        <begin position="162"/>
        <end position="169"/>
    </location>
</feature>
<feature type="turn" evidence="7">
    <location>
        <begin position="170"/>
        <end position="172"/>
    </location>
</feature>
<feature type="strand" evidence="7">
    <location>
        <begin position="179"/>
        <end position="181"/>
    </location>
</feature>
<feature type="helix" evidence="7">
    <location>
        <begin position="197"/>
        <end position="213"/>
    </location>
</feature>
<feature type="helix" evidence="7">
    <location>
        <begin position="220"/>
        <end position="230"/>
    </location>
</feature>
<feature type="helix" evidence="7">
    <location>
        <begin position="240"/>
        <end position="242"/>
    </location>
</feature>
<feature type="helix" evidence="7">
    <location>
        <begin position="260"/>
        <end position="282"/>
    </location>
</feature>
<feature type="helix" evidence="7">
    <location>
        <begin position="288"/>
        <end position="301"/>
    </location>
</feature>
<feature type="strand" evidence="7">
    <location>
        <begin position="302"/>
        <end position="305"/>
    </location>
</feature>
<feature type="helix" evidence="7">
    <location>
        <begin position="306"/>
        <end position="312"/>
    </location>
</feature>
<feature type="strand" evidence="7">
    <location>
        <begin position="323"/>
        <end position="328"/>
    </location>
</feature>
<feature type="helix" evidence="7">
    <location>
        <begin position="330"/>
        <end position="338"/>
    </location>
</feature>
<feature type="helix" evidence="7">
    <location>
        <begin position="349"/>
        <end position="361"/>
    </location>
</feature>
<feature type="helix" evidence="7">
    <location>
        <begin position="365"/>
        <end position="373"/>
    </location>
</feature>
<feature type="helix" evidence="7">
    <location>
        <begin position="379"/>
        <end position="385"/>
    </location>
</feature>
<feature type="helix" evidence="7">
    <location>
        <begin position="398"/>
        <end position="409"/>
    </location>
</feature>
<feature type="helix" evidence="7">
    <location>
        <begin position="414"/>
        <end position="421"/>
    </location>
</feature>
<feature type="strand" evidence="7">
    <location>
        <begin position="432"/>
        <end position="434"/>
    </location>
</feature>
<feature type="helix" evidence="7">
    <location>
        <begin position="438"/>
        <end position="440"/>
    </location>
</feature>
<feature type="helix" evidence="7">
    <location>
        <begin position="444"/>
        <end position="446"/>
    </location>
</feature>
<feature type="helix" evidence="7">
    <location>
        <begin position="450"/>
        <end position="470"/>
    </location>
</feature>
<feature type="strand" evidence="7">
    <location>
        <begin position="474"/>
        <end position="479"/>
    </location>
</feature>
<feature type="helix" evidence="7">
    <location>
        <begin position="642"/>
        <end position="654"/>
    </location>
</feature>
<feature type="strand" evidence="7">
    <location>
        <begin position="679"/>
        <end position="681"/>
    </location>
</feature>
<feature type="helix" evidence="7">
    <location>
        <begin position="684"/>
        <end position="693"/>
    </location>
</feature>
<feature type="helix" evidence="7">
    <location>
        <begin position="696"/>
        <end position="698"/>
    </location>
</feature>
<feature type="helix" evidence="7">
    <location>
        <begin position="706"/>
        <end position="715"/>
    </location>
</feature>
<feature type="helix" evidence="7">
    <location>
        <begin position="764"/>
        <end position="771"/>
    </location>
</feature>
<feature type="helix" evidence="7">
    <location>
        <begin position="795"/>
        <end position="798"/>
    </location>
</feature>
<feature type="helix" evidence="7">
    <location>
        <begin position="799"/>
        <end position="802"/>
    </location>
</feature>
<feature type="helix" evidence="7">
    <location>
        <begin position="804"/>
        <end position="814"/>
    </location>
</feature>
<feature type="strand" evidence="7">
    <location>
        <begin position="816"/>
        <end position="820"/>
    </location>
</feature>
<feature type="strand" evidence="7">
    <location>
        <begin position="823"/>
        <end position="827"/>
    </location>
</feature>
<feature type="strand" evidence="7">
    <location>
        <begin position="832"/>
        <end position="838"/>
    </location>
</feature>
<feature type="turn" evidence="7">
    <location>
        <begin position="839"/>
        <end position="841"/>
    </location>
</feature>
<feature type="strand" evidence="7">
    <location>
        <begin position="844"/>
        <end position="849"/>
    </location>
</feature>
<feature type="helix" evidence="7">
    <location>
        <begin position="851"/>
        <end position="856"/>
    </location>
</feature>
<feature type="strand" evidence="7">
    <location>
        <begin position="882"/>
        <end position="890"/>
    </location>
</feature>
<feature type="strand" evidence="7">
    <location>
        <begin position="893"/>
        <end position="897"/>
    </location>
</feature>
<feature type="strand" evidence="7">
    <location>
        <begin position="905"/>
        <end position="913"/>
    </location>
</feature>
<feature type="turn" evidence="7">
    <location>
        <begin position="914"/>
        <end position="917"/>
    </location>
</feature>
<feature type="strand" evidence="7">
    <location>
        <begin position="918"/>
        <end position="922"/>
    </location>
</feature>
<feature type="helix" evidence="7">
    <location>
        <begin position="933"/>
        <end position="938"/>
    </location>
</feature>
<feature type="turn" evidence="7">
    <location>
        <begin position="939"/>
        <end position="941"/>
    </location>
</feature>
<feature type="strand" evidence="7">
    <location>
        <begin position="948"/>
        <end position="953"/>
    </location>
</feature>
<feature type="strand" evidence="7">
    <location>
        <begin position="958"/>
        <end position="965"/>
    </location>
</feature>
<feature type="strand" evidence="7">
    <location>
        <begin position="971"/>
        <end position="973"/>
    </location>
</feature>
<comment type="function">
    <text evidence="1 3">CRISPR (clustered regularly interspaced short palindromic repeat) is an adaptive immune system that provides protection against mobile genetic elements (viruses, transposable elements and conjugative plasmids). CRISPR clusters contain spacers, sequences complementary to antecedent mobile elements, and target invading nucleic acids. CRISPR clusters are transcribed and processed into CRISPR RNA (crRNA). In type II CRISPR systems correct processing of pre-crRNA requires a trans-encoded small RNA (tracrRNA), endogenous ribonuclease 3 (rnc) and this protein. The tracrRNA serves as a guide for ribonuclease 3-aided processing of pre-crRNA. Subsequently Cas9/crRNA/tracrRNA endonucleolytically cleaves linear or circular dsDNA target complementary to the spacer; Cas9 is inactive in the absence of the 2 guide RNAs (gRNA). Cas9 recognizes the protospacer adjacent motif (PAM) in the CRISPR repeat sequences to help distinguish self versus nonself, as targets within the bacterial CRISPR locus do not have PAMs. PAM recognition is also required for catalytic activity (By similarity). Cuts target DNA in Cas9:gRNAs mixing experiments with N.meningitidis strain Z2491 and P.multocoda strain Pm70.</text>
</comment>
<comment type="cofactor">
    <cofactor evidence="1">
        <name>Mg(2+)</name>
        <dbReference type="ChEBI" id="CHEBI:18420"/>
    </cofactor>
</comment>
<comment type="subunit">
    <text evidence="1">Monomer. Binds crRNA and tracrRNA.</text>
</comment>
<comment type="domain">
    <text evidence="1">Has 2 endonuclease domains. The discontinuous RuvC-like domain cleaves the target DNA noncomplementary to crRNA while the HNH nuclease domain cleaves the target DNA complementary to crRNA.</text>
</comment>
<comment type="biotechnology">
    <text evidence="4 5">The simplicity of the Cas9-gRNAs RNA-directed DNA endonuclease activity may be used to target and modify a DNA sequence of interest.</text>
</comment>
<comment type="similarity">
    <text evidence="1">Belongs to the CRISPR-associated protein Cas9 family. Subtype II-C subfamily.</text>
</comment>
<gene>
    <name evidence="1" type="primary">cas9</name>
    <name type="ordered locus">Cj1523c</name>
</gene>
<reference key="1">
    <citation type="journal article" date="2000" name="Nature">
        <title>The genome sequence of the food-borne pathogen Campylobacter jejuni reveals hypervariable sequences.</title>
        <authorList>
            <person name="Parkhill J."/>
            <person name="Wren B.W."/>
            <person name="Mungall K.L."/>
            <person name="Ketley J.M."/>
            <person name="Churcher C.M."/>
            <person name="Basham D."/>
            <person name="Chillingworth T."/>
            <person name="Davies R.M."/>
            <person name="Feltwell T."/>
            <person name="Holroyd S."/>
            <person name="Jagels K."/>
            <person name="Karlyshev A.V."/>
            <person name="Moule S."/>
            <person name="Pallen M.J."/>
            <person name="Penn C.W."/>
            <person name="Quail M.A."/>
            <person name="Rajandream M.A."/>
            <person name="Rutherford K.M."/>
            <person name="van Vliet A.H.M."/>
            <person name="Whitehead S."/>
            <person name="Barrell B.G."/>
        </authorList>
    </citation>
    <scope>NUCLEOTIDE SEQUENCE [LARGE SCALE GENOMIC DNA]</scope>
    <source>
        <strain>ATCC 700819 / NCTC 11168</strain>
    </source>
</reference>
<reference key="2">
    <citation type="journal article" date="2014" name="Nucleic Acids Res.">
        <title>Phylogeny of Cas9 determines functional exchangeability of dual-RNA and Cas9 among orthologous type II CRISPR-Cas systems.</title>
        <authorList>
            <person name="Fonfara I."/>
            <person name="Le Rhun A."/>
            <person name="Chylinski K."/>
            <person name="Makarova K.S."/>
            <person name="Lecrivain A.L."/>
            <person name="Bzdrenga J."/>
            <person name="Koonin E.V."/>
            <person name="Charpentier E."/>
        </authorList>
    </citation>
    <scope>FUNCTION AS AN ENDONUCLEASE</scope>
    <scope>POSSIBLE BIOTECHNOLOGY</scope>
    <source>
        <strain>ATCC 700819 / NCTC 11168</strain>
    </source>
</reference>
<reference key="3">
    <citation type="journal article" date="2023" name="Nat. Commun.">
        <title>Assessing and advancing the safety of CRISPR-Cas tools: from DNA to RNA editing.</title>
        <authorList>
            <person name="Tao J."/>
            <person name="Bauer D.E."/>
            <person name="Chiarle R."/>
        </authorList>
    </citation>
    <scope>REVIEW ON SAFETY OF GENOME EDITING TOOLS</scope>
</reference>
<evidence type="ECO:0000255" key="1">
    <source>
        <dbReference type="HAMAP-Rule" id="MF_01480"/>
    </source>
</evidence>
<evidence type="ECO:0000255" key="2">
    <source>
        <dbReference type="PROSITE-ProRule" id="PRU01085"/>
    </source>
</evidence>
<evidence type="ECO:0000269" key="3">
    <source>
    </source>
</evidence>
<evidence type="ECO:0000305" key="4">
    <source>
    </source>
</evidence>
<evidence type="ECO:0000305" key="5">
    <source>
    </source>
</evidence>
<evidence type="ECO:0007829" key="6">
    <source>
        <dbReference type="PDB" id="5X2G"/>
    </source>
</evidence>
<evidence type="ECO:0007829" key="7">
    <source>
        <dbReference type="PDB" id="5X2H"/>
    </source>
</evidence>
<dbReference type="EMBL" id="AL111168">
    <property type="protein sequence ID" value="CAL35627.1"/>
    <property type="molecule type" value="Genomic_DNA"/>
</dbReference>
<dbReference type="PIR" id="F81299">
    <property type="entry name" value="F81299"/>
</dbReference>
<dbReference type="RefSeq" id="WP_002864485.1">
    <property type="nucleotide sequence ID" value="NZ_SZUC01000003.1"/>
</dbReference>
<dbReference type="RefSeq" id="YP_002344900.1">
    <property type="nucleotide sequence ID" value="NC_002163.1"/>
</dbReference>
<dbReference type="PDB" id="5X2G">
    <property type="method" value="X-ray"/>
    <property type="resolution" value="2.40 A"/>
    <property type="chains" value="A=1-480, A=642-984"/>
</dbReference>
<dbReference type="PDB" id="5X2H">
    <property type="method" value="X-ray"/>
    <property type="resolution" value="2.30 A"/>
    <property type="chains" value="A=1-480, A=642-984"/>
</dbReference>
<dbReference type="PDBsum" id="5X2G"/>
<dbReference type="PDBsum" id="5X2H"/>
<dbReference type="SMR" id="Q0P897"/>
<dbReference type="STRING" id="192222.Cj1523c"/>
<dbReference type="PaxDb" id="192222-Cj1523c"/>
<dbReference type="EnsemblBacteria" id="CAL35627">
    <property type="protein sequence ID" value="CAL35627"/>
    <property type="gene ID" value="Cj1523c"/>
</dbReference>
<dbReference type="GeneID" id="905809"/>
<dbReference type="KEGG" id="cje:Cj1523c"/>
<dbReference type="PATRIC" id="fig|192222.6.peg.1501"/>
<dbReference type="eggNOG" id="COG3513">
    <property type="taxonomic scope" value="Bacteria"/>
</dbReference>
<dbReference type="HOGENOM" id="CLU_007514_0_0_7"/>
<dbReference type="OrthoDB" id="9777169at2"/>
<dbReference type="PHI-base" id="PHI:8394"/>
<dbReference type="Proteomes" id="UP000000799">
    <property type="component" value="Chromosome"/>
</dbReference>
<dbReference type="GO" id="GO:0003677">
    <property type="term" value="F:DNA binding"/>
    <property type="evidence" value="ECO:0007669"/>
    <property type="project" value="UniProtKB-KW"/>
</dbReference>
<dbReference type="GO" id="GO:0004519">
    <property type="term" value="F:endonuclease activity"/>
    <property type="evidence" value="ECO:0007669"/>
    <property type="project" value="UniProtKB-UniRule"/>
</dbReference>
<dbReference type="GO" id="GO:0046872">
    <property type="term" value="F:metal ion binding"/>
    <property type="evidence" value="ECO:0007669"/>
    <property type="project" value="UniProtKB-UniRule"/>
</dbReference>
<dbReference type="GO" id="GO:0003723">
    <property type="term" value="F:RNA binding"/>
    <property type="evidence" value="ECO:0007669"/>
    <property type="project" value="UniProtKB-KW"/>
</dbReference>
<dbReference type="GO" id="GO:0051607">
    <property type="term" value="P:defense response to virus"/>
    <property type="evidence" value="ECO:0007669"/>
    <property type="project" value="UniProtKB-UniRule"/>
</dbReference>
<dbReference type="GO" id="GO:0043571">
    <property type="term" value="P:maintenance of CRISPR repeat elements"/>
    <property type="evidence" value="ECO:0007669"/>
    <property type="project" value="UniProtKB-UniRule"/>
</dbReference>
<dbReference type="CDD" id="cd09643">
    <property type="entry name" value="Csn1"/>
    <property type="match status" value="1"/>
</dbReference>
<dbReference type="Gene3D" id="3.30.420.10">
    <property type="entry name" value="Ribonuclease H-like superfamily/Ribonuclease H"/>
    <property type="match status" value="3"/>
</dbReference>
<dbReference type="HAMAP" id="MF_01480">
    <property type="entry name" value="Cas9"/>
    <property type="match status" value="1"/>
</dbReference>
<dbReference type="InterPro" id="IPR028629">
    <property type="entry name" value="Cas9"/>
</dbReference>
<dbReference type="InterPro" id="IPR054373">
    <property type="entry name" value="Cas9_PI_C_campylobact"/>
</dbReference>
<dbReference type="InterPro" id="IPR054369">
    <property type="entry name" value="Cas9_WED"/>
</dbReference>
<dbReference type="InterPro" id="IPR033114">
    <property type="entry name" value="HNH_CAS9"/>
</dbReference>
<dbReference type="InterPro" id="IPR003615">
    <property type="entry name" value="HNH_nuc"/>
</dbReference>
<dbReference type="InterPro" id="IPR036397">
    <property type="entry name" value="RNaseH_sf"/>
</dbReference>
<dbReference type="InterPro" id="IPR041383">
    <property type="entry name" value="RuvC_III"/>
</dbReference>
<dbReference type="NCBIfam" id="TIGR01865">
    <property type="entry name" value="cas_Csn1"/>
    <property type="match status" value="1"/>
</dbReference>
<dbReference type="Pfam" id="PF22131">
    <property type="entry name" value="CjCas9_PI_CTD"/>
    <property type="match status" value="1"/>
</dbReference>
<dbReference type="Pfam" id="PF22129">
    <property type="entry name" value="CjCas9_WED-like"/>
    <property type="match status" value="1"/>
</dbReference>
<dbReference type="Pfam" id="PF13395">
    <property type="entry name" value="HNH_4"/>
    <property type="match status" value="1"/>
</dbReference>
<dbReference type="Pfam" id="PF18541">
    <property type="entry name" value="RuvC_III"/>
    <property type="match status" value="1"/>
</dbReference>
<dbReference type="PROSITE" id="PS51749">
    <property type="entry name" value="HNH_CAS9"/>
    <property type="match status" value="1"/>
</dbReference>
<name>CAS9_CAMJE</name>
<protein>
    <recommendedName>
        <fullName evidence="1">CRISPR-associated endonuclease Cas9</fullName>
    </recommendedName>
</protein>
<keyword id="KW-0002">3D-structure</keyword>
<keyword id="KW-0051">Antiviral defense</keyword>
<keyword id="KW-0238">DNA-binding</keyword>
<keyword id="KW-0255">Endonuclease</keyword>
<keyword id="KW-0378">Hydrolase</keyword>
<keyword id="KW-0460">Magnesium</keyword>
<keyword id="KW-0464">Manganese</keyword>
<keyword id="KW-0479">Metal-binding</keyword>
<keyword id="KW-0540">Nuclease</keyword>
<keyword id="KW-1185">Reference proteome</keyword>
<keyword id="KW-0694">RNA-binding</keyword>
<accession>Q0P897</accession>